<accession>B5Z9S9</accession>
<dbReference type="EC" id="4.2.1.11" evidence="1"/>
<dbReference type="EMBL" id="CP001173">
    <property type="protein sequence ID" value="ACI26909.1"/>
    <property type="molecule type" value="Genomic_DNA"/>
</dbReference>
<dbReference type="RefSeq" id="WP_000955660.1">
    <property type="nucleotide sequence ID" value="NC_011333.1"/>
</dbReference>
<dbReference type="SMR" id="B5Z9S9"/>
<dbReference type="KEGG" id="hpg:HPG27_141"/>
<dbReference type="HOGENOM" id="CLU_031223_2_1_7"/>
<dbReference type="UniPathway" id="UPA00109">
    <property type="reaction ID" value="UER00187"/>
</dbReference>
<dbReference type="Proteomes" id="UP000001735">
    <property type="component" value="Chromosome"/>
</dbReference>
<dbReference type="GO" id="GO:0009986">
    <property type="term" value="C:cell surface"/>
    <property type="evidence" value="ECO:0007669"/>
    <property type="project" value="UniProtKB-SubCell"/>
</dbReference>
<dbReference type="GO" id="GO:0005576">
    <property type="term" value="C:extracellular region"/>
    <property type="evidence" value="ECO:0007669"/>
    <property type="project" value="UniProtKB-SubCell"/>
</dbReference>
<dbReference type="GO" id="GO:0000015">
    <property type="term" value="C:phosphopyruvate hydratase complex"/>
    <property type="evidence" value="ECO:0007669"/>
    <property type="project" value="InterPro"/>
</dbReference>
<dbReference type="GO" id="GO:0000287">
    <property type="term" value="F:magnesium ion binding"/>
    <property type="evidence" value="ECO:0007669"/>
    <property type="project" value="UniProtKB-UniRule"/>
</dbReference>
<dbReference type="GO" id="GO:0004634">
    <property type="term" value="F:phosphopyruvate hydratase activity"/>
    <property type="evidence" value="ECO:0007669"/>
    <property type="project" value="UniProtKB-UniRule"/>
</dbReference>
<dbReference type="GO" id="GO:0006096">
    <property type="term" value="P:glycolytic process"/>
    <property type="evidence" value="ECO:0007669"/>
    <property type="project" value="UniProtKB-UniRule"/>
</dbReference>
<dbReference type="CDD" id="cd03313">
    <property type="entry name" value="enolase"/>
    <property type="match status" value="1"/>
</dbReference>
<dbReference type="Gene3D" id="3.20.20.120">
    <property type="entry name" value="Enolase-like C-terminal domain"/>
    <property type="match status" value="1"/>
</dbReference>
<dbReference type="Gene3D" id="3.30.390.10">
    <property type="entry name" value="Enolase-like, N-terminal domain"/>
    <property type="match status" value="1"/>
</dbReference>
<dbReference type="HAMAP" id="MF_00318">
    <property type="entry name" value="Enolase"/>
    <property type="match status" value="1"/>
</dbReference>
<dbReference type="InterPro" id="IPR000941">
    <property type="entry name" value="Enolase"/>
</dbReference>
<dbReference type="InterPro" id="IPR036849">
    <property type="entry name" value="Enolase-like_C_sf"/>
</dbReference>
<dbReference type="InterPro" id="IPR029017">
    <property type="entry name" value="Enolase-like_N"/>
</dbReference>
<dbReference type="InterPro" id="IPR020810">
    <property type="entry name" value="Enolase_C"/>
</dbReference>
<dbReference type="InterPro" id="IPR020809">
    <property type="entry name" value="Enolase_CS"/>
</dbReference>
<dbReference type="InterPro" id="IPR020811">
    <property type="entry name" value="Enolase_N"/>
</dbReference>
<dbReference type="NCBIfam" id="TIGR01060">
    <property type="entry name" value="eno"/>
    <property type="match status" value="1"/>
</dbReference>
<dbReference type="PANTHER" id="PTHR11902">
    <property type="entry name" value="ENOLASE"/>
    <property type="match status" value="1"/>
</dbReference>
<dbReference type="PANTHER" id="PTHR11902:SF1">
    <property type="entry name" value="ENOLASE"/>
    <property type="match status" value="1"/>
</dbReference>
<dbReference type="Pfam" id="PF00113">
    <property type="entry name" value="Enolase_C"/>
    <property type="match status" value="1"/>
</dbReference>
<dbReference type="Pfam" id="PF03952">
    <property type="entry name" value="Enolase_N"/>
    <property type="match status" value="1"/>
</dbReference>
<dbReference type="PIRSF" id="PIRSF001400">
    <property type="entry name" value="Enolase"/>
    <property type="match status" value="1"/>
</dbReference>
<dbReference type="PRINTS" id="PR00148">
    <property type="entry name" value="ENOLASE"/>
</dbReference>
<dbReference type="SFLD" id="SFLDF00002">
    <property type="entry name" value="enolase"/>
    <property type="match status" value="1"/>
</dbReference>
<dbReference type="SFLD" id="SFLDG00178">
    <property type="entry name" value="enolase"/>
    <property type="match status" value="1"/>
</dbReference>
<dbReference type="SMART" id="SM01192">
    <property type="entry name" value="Enolase_C"/>
    <property type="match status" value="1"/>
</dbReference>
<dbReference type="SMART" id="SM01193">
    <property type="entry name" value="Enolase_N"/>
    <property type="match status" value="1"/>
</dbReference>
<dbReference type="SUPFAM" id="SSF51604">
    <property type="entry name" value="Enolase C-terminal domain-like"/>
    <property type="match status" value="1"/>
</dbReference>
<dbReference type="SUPFAM" id="SSF54826">
    <property type="entry name" value="Enolase N-terminal domain-like"/>
    <property type="match status" value="1"/>
</dbReference>
<dbReference type="PROSITE" id="PS00164">
    <property type="entry name" value="ENOLASE"/>
    <property type="match status" value="1"/>
</dbReference>
<gene>
    <name evidence="1" type="primary">eno</name>
    <name type="ordered locus">HPG27_141</name>
</gene>
<comment type="function">
    <text evidence="1">Catalyzes the reversible conversion of 2-phosphoglycerate (2-PG) into phosphoenolpyruvate (PEP). It is essential for the degradation of carbohydrates via glycolysis.</text>
</comment>
<comment type="catalytic activity">
    <reaction evidence="1">
        <text>(2R)-2-phosphoglycerate = phosphoenolpyruvate + H2O</text>
        <dbReference type="Rhea" id="RHEA:10164"/>
        <dbReference type="ChEBI" id="CHEBI:15377"/>
        <dbReference type="ChEBI" id="CHEBI:58289"/>
        <dbReference type="ChEBI" id="CHEBI:58702"/>
        <dbReference type="EC" id="4.2.1.11"/>
    </reaction>
</comment>
<comment type="cofactor">
    <cofactor evidence="1">
        <name>Mg(2+)</name>
        <dbReference type="ChEBI" id="CHEBI:18420"/>
    </cofactor>
    <text evidence="1">Binds a second Mg(2+) ion via substrate during catalysis.</text>
</comment>
<comment type="pathway">
    <text evidence="1">Carbohydrate degradation; glycolysis; pyruvate from D-glyceraldehyde 3-phosphate: step 4/5.</text>
</comment>
<comment type="subcellular location">
    <subcellularLocation>
        <location evidence="1">Cytoplasm</location>
    </subcellularLocation>
    <subcellularLocation>
        <location evidence="1">Secreted</location>
    </subcellularLocation>
    <subcellularLocation>
        <location evidence="1">Cell surface</location>
    </subcellularLocation>
    <text evidence="1">Fractions of enolase are present in both the cytoplasm and on the cell surface.</text>
</comment>
<comment type="similarity">
    <text evidence="1">Belongs to the enolase family.</text>
</comment>
<keyword id="KW-0963">Cytoplasm</keyword>
<keyword id="KW-0324">Glycolysis</keyword>
<keyword id="KW-0456">Lyase</keyword>
<keyword id="KW-0460">Magnesium</keyword>
<keyword id="KW-0479">Metal-binding</keyword>
<keyword id="KW-1185">Reference proteome</keyword>
<keyword id="KW-0964">Secreted</keyword>
<feature type="chain" id="PRO_1000115871" description="Enolase">
    <location>
        <begin position="1"/>
        <end position="426"/>
    </location>
</feature>
<feature type="active site" description="Proton donor" evidence="1">
    <location>
        <position position="205"/>
    </location>
</feature>
<feature type="active site" description="Proton acceptor" evidence="1">
    <location>
        <position position="338"/>
    </location>
</feature>
<feature type="binding site" evidence="1">
    <location>
        <position position="163"/>
    </location>
    <ligand>
        <name>(2R)-2-phosphoglycerate</name>
        <dbReference type="ChEBI" id="CHEBI:58289"/>
    </ligand>
</feature>
<feature type="binding site" evidence="1">
    <location>
        <position position="242"/>
    </location>
    <ligand>
        <name>Mg(2+)</name>
        <dbReference type="ChEBI" id="CHEBI:18420"/>
    </ligand>
</feature>
<feature type="binding site" evidence="1">
    <location>
        <position position="286"/>
    </location>
    <ligand>
        <name>Mg(2+)</name>
        <dbReference type="ChEBI" id="CHEBI:18420"/>
    </ligand>
</feature>
<feature type="binding site" evidence="1">
    <location>
        <position position="313"/>
    </location>
    <ligand>
        <name>Mg(2+)</name>
        <dbReference type="ChEBI" id="CHEBI:18420"/>
    </ligand>
</feature>
<feature type="binding site" evidence="1">
    <location>
        <position position="338"/>
    </location>
    <ligand>
        <name>(2R)-2-phosphoglycerate</name>
        <dbReference type="ChEBI" id="CHEBI:58289"/>
    </ligand>
</feature>
<feature type="binding site" evidence="1">
    <location>
        <position position="367"/>
    </location>
    <ligand>
        <name>(2R)-2-phosphoglycerate</name>
        <dbReference type="ChEBI" id="CHEBI:58289"/>
    </ligand>
</feature>
<feature type="binding site" evidence="1">
    <location>
        <position position="368"/>
    </location>
    <ligand>
        <name>(2R)-2-phosphoglycerate</name>
        <dbReference type="ChEBI" id="CHEBI:58289"/>
    </ligand>
</feature>
<feature type="binding site" evidence="1">
    <location>
        <position position="389"/>
    </location>
    <ligand>
        <name>(2R)-2-phosphoglycerate</name>
        <dbReference type="ChEBI" id="CHEBI:58289"/>
    </ligand>
</feature>
<name>ENO_HELPG</name>
<sequence>MLTIKDIHALEVMDSRGNPTIQASVILSDNTKASAIVPSGASTGKREALELRDNDKTRFLGKGVLRACENVNSVIKHHLIGLEATSQAFVDERLRALDGTPNYANLGANAVLGVSMALARASAKALNLPLYRYLGGANALTLPVPMLNIINGGTHANNSIDFQEYMIMPLGFESFREALRASAEVYHTLKKLLDEKNQLTSVGDEGGFAPNFNNNVEPLEIISQAIEKAGYKLGEEIALALDVASSELVDEHFNYHLKGENKILDSHELVAYYKELVAKYPIVSIEDGLSEDDWEGWAFLSKELGRQIQLVGDDLFVTNASILQKGIEKNIANAILIKPNQIGTISETLETIRLAKHHAYQCVMSHRSGESEDSFIADFAVALNTGEIKTGSTARSERIAKYNRLLEIEHELKGGIYIGKELFKHG</sequence>
<evidence type="ECO:0000255" key="1">
    <source>
        <dbReference type="HAMAP-Rule" id="MF_00318"/>
    </source>
</evidence>
<proteinExistence type="inferred from homology"/>
<reference key="1">
    <citation type="journal article" date="2009" name="J. Bacteriol.">
        <title>The complete genome sequence of Helicobacter pylori strain G27.</title>
        <authorList>
            <person name="Baltrus D.A."/>
            <person name="Amieva M.R."/>
            <person name="Covacci A."/>
            <person name="Lowe T.M."/>
            <person name="Merrell D.S."/>
            <person name="Ottemann K.M."/>
            <person name="Stein M."/>
            <person name="Salama N.R."/>
            <person name="Guillemin K."/>
        </authorList>
    </citation>
    <scope>NUCLEOTIDE SEQUENCE [LARGE SCALE GENOMIC DNA]</scope>
    <source>
        <strain>G27</strain>
    </source>
</reference>
<protein>
    <recommendedName>
        <fullName evidence="1">Enolase</fullName>
        <ecNumber evidence="1">4.2.1.11</ecNumber>
    </recommendedName>
    <alternativeName>
        <fullName evidence="1">2-phospho-D-glycerate hydro-lyase</fullName>
    </alternativeName>
    <alternativeName>
        <fullName evidence="1">2-phosphoglycerate dehydratase</fullName>
    </alternativeName>
</protein>
<organism>
    <name type="scientific">Helicobacter pylori (strain G27)</name>
    <dbReference type="NCBI Taxonomy" id="563041"/>
    <lineage>
        <taxon>Bacteria</taxon>
        <taxon>Pseudomonadati</taxon>
        <taxon>Campylobacterota</taxon>
        <taxon>Epsilonproteobacteria</taxon>
        <taxon>Campylobacterales</taxon>
        <taxon>Helicobacteraceae</taxon>
        <taxon>Helicobacter</taxon>
    </lineage>
</organism>